<proteinExistence type="inferred from homology"/>
<evidence type="ECO:0000255" key="1">
    <source>
        <dbReference type="HAMAP-Rule" id="MF_00250"/>
    </source>
</evidence>
<gene>
    <name evidence="1" type="primary">rpo10</name>
    <name evidence="1" type="synonym">rpoN</name>
    <name type="ordered locus">PTO0325</name>
</gene>
<sequence>MIIPVRCFSCGRVIASDYVRFTEACTKIINETGREPRGEEKAKILDDLGVKRYCCRRMILSHKDLIDEVLPY</sequence>
<protein>
    <recommendedName>
        <fullName evidence="1">DNA-directed RNA polymerase subunit Rpo10</fullName>
        <ecNumber evidence="1">2.7.7.6</ecNumber>
    </recommendedName>
    <alternativeName>
        <fullName evidence="1">DNA-directed RNA polymerase subunit N</fullName>
    </alternativeName>
</protein>
<name>RPO10_PICTO</name>
<dbReference type="EC" id="2.7.7.6" evidence="1"/>
<dbReference type="EMBL" id="AE017261">
    <property type="protein sequence ID" value="AAT42910.1"/>
    <property type="molecule type" value="Genomic_DNA"/>
</dbReference>
<dbReference type="RefSeq" id="WP_011177126.1">
    <property type="nucleotide sequence ID" value="NC_005877.1"/>
</dbReference>
<dbReference type="SMR" id="Q6L292"/>
<dbReference type="FunCoup" id="Q6L292">
    <property type="interactions" value="78"/>
</dbReference>
<dbReference type="STRING" id="263820.PTO0325"/>
<dbReference type="PaxDb" id="263820-PTO0325"/>
<dbReference type="GeneID" id="2844000"/>
<dbReference type="KEGG" id="pto:PTO0325"/>
<dbReference type="PATRIC" id="fig|263820.9.peg.347"/>
<dbReference type="eggNOG" id="arCOG04244">
    <property type="taxonomic scope" value="Archaea"/>
</dbReference>
<dbReference type="HOGENOM" id="CLU_143122_2_1_2"/>
<dbReference type="InParanoid" id="Q6L292"/>
<dbReference type="OrthoDB" id="371754at2157"/>
<dbReference type="Proteomes" id="UP000000438">
    <property type="component" value="Chromosome"/>
</dbReference>
<dbReference type="GO" id="GO:0005737">
    <property type="term" value="C:cytoplasm"/>
    <property type="evidence" value="ECO:0007669"/>
    <property type="project" value="UniProtKB-SubCell"/>
</dbReference>
<dbReference type="GO" id="GO:0000428">
    <property type="term" value="C:DNA-directed RNA polymerase complex"/>
    <property type="evidence" value="ECO:0007669"/>
    <property type="project" value="UniProtKB-KW"/>
</dbReference>
<dbReference type="GO" id="GO:0003677">
    <property type="term" value="F:DNA binding"/>
    <property type="evidence" value="ECO:0007669"/>
    <property type="project" value="InterPro"/>
</dbReference>
<dbReference type="GO" id="GO:0003899">
    <property type="term" value="F:DNA-directed RNA polymerase activity"/>
    <property type="evidence" value="ECO:0007669"/>
    <property type="project" value="UniProtKB-UniRule"/>
</dbReference>
<dbReference type="GO" id="GO:0008270">
    <property type="term" value="F:zinc ion binding"/>
    <property type="evidence" value="ECO:0007669"/>
    <property type="project" value="UniProtKB-UniRule"/>
</dbReference>
<dbReference type="GO" id="GO:0006351">
    <property type="term" value="P:DNA-templated transcription"/>
    <property type="evidence" value="ECO:0007669"/>
    <property type="project" value="UniProtKB-UniRule"/>
</dbReference>
<dbReference type="Gene3D" id="1.10.10.60">
    <property type="entry name" value="Homeodomain-like"/>
    <property type="match status" value="1"/>
</dbReference>
<dbReference type="HAMAP" id="MF_00250">
    <property type="entry name" value="RNApol_arch_Rpo10"/>
    <property type="match status" value="1"/>
</dbReference>
<dbReference type="InterPro" id="IPR023580">
    <property type="entry name" value="RNA_pol_su_RPB10"/>
</dbReference>
<dbReference type="InterPro" id="IPR020789">
    <property type="entry name" value="RNA_pol_suN_Zn-BS"/>
</dbReference>
<dbReference type="InterPro" id="IPR000268">
    <property type="entry name" value="RPABC5/Rpb10"/>
</dbReference>
<dbReference type="NCBIfam" id="NF003089">
    <property type="entry name" value="PRK04016.1"/>
    <property type="match status" value="1"/>
</dbReference>
<dbReference type="PANTHER" id="PTHR23431:SF3">
    <property type="entry name" value="DNA-DIRECTED RNA POLYMERASES I, II, AND III SUBUNIT RPABC5"/>
    <property type="match status" value="1"/>
</dbReference>
<dbReference type="PANTHER" id="PTHR23431">
    <property type="entry name" value="DNA-DIRECTED RNA POLYMERASES I, II, AND III SUBUNIT RPABC5 FAMILY MEMBER"/>
    <property type="match status" value="1"/>
</dbReference>
<dbReference type="Pfam" id="PF01194">
    <property type="entry name" value="RNA_pol_N"/>
    <property type="match status" value="1"/>
</dbReference>
<dbReference type="PIRSF" id="PIRSF005653">
    <property type="entry name" value="RNA_pol_N/8_sub"/>
    <property type="match status" value="1"/>
</dbReference>
<dbReference type="SUPFAM" id="SSF46924">
    <property type="entry name" value="RNA polymerase subunit RPB10"/>
    <property type="match status" value="1"/>
</dbReference>
<dbReference type="PROSITE" id="PS01112">
    <property type="entry name" value="RNA_POL_N_8KD"/>
    <property type="match status" value="1"/>
</dbReference>
<comment type="function">
    <text evidence="1">DNA-dependent RNA polymerase (RNAP) catalyzes the transcription of DNA into RNA using the four ribonucleoside triphosphates as substrates.</text>
</comment>
<comment type="catalytic activity">
    <reaction evidence="1">
        <text>RNA(n) + a ribonucleoside 5'-triphosphate = RNA(n+1) + diphosphate</text>
        <dbReference type="Rhea" id="RHEA:21248"/>
        <dbReference type="Rhea" id="RHEA-COMP:14527"/>
        <dbReference type="Rhea" id="RHEA-COMP:17342"/>
        <dbReference type="ChEBI" id="CHEBI:33019"/>
        <dbReference type="ChEBI" id="CHEBI:61557"/>
        <dbReference type="ChEBI" id="CHEBI:140395"/>
        <dbReference type="EC" id="2.7.7.6"/>
    </reaction>
</comment>
<comment type="cofactor">
    <cofactor evidence="1">
        <name>Zn(2+)</name>
        <dbReference type="ChEBI" id="CHEBI:29105"/>
    </cofactor>
    <text evidence="1">Binds 1 zinc ion.</text>
</comment>
<comment type="subunit">
    <text evidence="1">Part of the RNA polymerase complex.</text>
</comment>
<comment type="subcellular location">
    <subcellularLocation>
        <location evidence="1">Cytoplasm</location>
    </subcellularLocation>
</comment>
<comment type="similarity">
    <text evidence="1">Belongs to the archaeal Rpo10/eukaryotic RPB10 RNA polymerase subunit family.</text>
</comment>
<reference key="1">
    <citation type="journal article" date="2004" name="Proc. Natl. Acad. Sci. U.S.A.">
        <title>Genome sequence of Picrophilus torridus and its implications for life around pH 0.</title>
        <authorList>
            <person name="Fuetterer O."/>
            <person name="Angelov A."/>
            <person name="Liesegang H."/>
            <person name="Gottschalk G."/>
            <person name="Schleper C."/>
            <person name="Schepers B."/>
            <person name="Dock C."/>
            <person name="Antranikian G."/>
            <person name="Liebl W."/>
        </authorList>
    </citation>
    <scope>NUCLEOTIDE SEQUENCE [LARGE SCALE GENOMIC DNA]</scope>
    <source>
        <strain>ATCC 700027 / DSM 9790 / JCM 10055 / NBRC 100828 / KAW 2/3</strain>
    </source>
</reference>
<feature type="chain" id="PRO_0000121355" description="DNA-directed RNA polymerase subunit Rpo10">
    <location>
        <begin position="1"/>
        <end position="72"/>
    </location>
</feature>
<feature type="binding site" evidence="1">
    <location>
        <position position="7"/>
    </location>
    <ligand>
        <name>Zn(2+)</name>
        <dbReference type="ChEBI" id="CHEBI:29105"/>
    </ligand>
</feature>
<feature type="binding site" evidence="1">
    <location>
        <position position="10"/>
    </location>
    <ligand>
        <name>Zn(2+)</name>
        <dbReference type="ChEBI" id="CHEBI:29105"/>
    </ligand>
</feature>
<feature type="binding site" evidence="1">
    <location>
        <position position="54"/>
    </location>
    <ligand>
        <name>Zn(2+)</name>
        <dbReference type="ChEBI" id="CHEBI:29105"/>
    </ligand>
</feature>
<feature type="binding site" evidence="1">
    <location>
        <position position="55"/>
    </location>
    <ligand>
        <name>Zn(2+)</name>
        <dbReference type="ChEBI" id="CHEBI:29105"/>
    </ligand>
</feature>
<keyword id="KW-0963">Cytoplasm</keyword>
<keyword id="KW-0240">DNA-directed RNA polymerase</keyword>
<keyword id="KW-0479">Metal-binding</keyword>
<keyword id="KW-0548">Nucleotidyltransferase</keyword>
<keyword id="KW-0804">Transcription</keyword>
<keyword id="KW-0808">Transferase</keyword>
<keyword id="KW-0862">Zinc</keyword>
<organism>
    <name type="scientific">Picrophilus torridus (strain ATCC 700027 / DSM 9790 / JCM 10055 / NBRC 100828 / KAW 2/3)</name>
    <dbReference type="NCBI Taxonomy" id="1122961"/>
    <lineage>
        <taxon>Archaea</taxon>
        <taxon>Methanobacteriati</taxon>
        <taxon>Thermoplasmatota</taxon>
        <taxon>Thermoplasmata</taxon>
        <taxon>Thermoplasmatales</taxon>
        <taxon>Picrophilaceae</taxon>
        <taxon>Picrophilus</taxon>
    </lineage>
</organism>
<accession>Q6L292</accession>